<evidence type="ECO:0000255" key="1">
    <source>
        <dbReference type="HAMAP-Rule" id="MF_00480"/>
    </source>
</evidence>
<evidence type="ECO:0000305" key="2"/>
<comment type="function">
    <text evidence="1">One of the primary rRNA binding proteins, it binds directly to 16S rRNA where it nucleates assembly of the head domain of the 30S subunit. Is located at the subunit interface close to the decoding center, probably blocks exit of the E-site tRNA.</text>
</comment>
<comment type="subunit">
    <text evidence="1">Part of the 30S ribosomal subunit. Contacts proteins S9 and S11.</text>
</comment>
<comment type="similarity">
    <text evidence="1">Belongs to the universal ribosomal protein uS7 family.</text>
</comment>
<protein>
    <recommendedName>
        <fullName evidence="1">Small ribosomal subunit protein uS7</fullName>
    </recommendedName>
    <alternativeName>
        <fullName evidence="2">30S ribosomal protein S7</fullName>
    </alternativeName>
</protein>
<reference key="1">
    <citation type="journal article" date="2009" name="BMC Genomics">
        <title>Analysis of the Rickettsia africae genome reveals that virulence acquisition in Rickettsia species may be explained by genome reduction.</title>
        <authorList>
            <person name="Fournier P.-E."/>
            <person name="El Karkouri K."/>
            <person name="Leroy Q."/>
            <person name="Robert C."/>
            <person name="Giumelli B."/>
            <person name="Renesto P."/>
            <person name="Socolovschi C."/>
            <person name="Parola P."/>
            <person name="Audic S."/>
            <person name="Raoult D."/>
        </authorList>
    </citation>
    <scope>NUCLEOTIDE SEQUENCE [LARGE SCALE GENOMIC DNA]</scope>
    <source>
        <strain>ESF-5</strain>
    </source>
</reference>
<name>RS7_RICAE</name>
<keyword id="KW-0687">Ribonucleoprotein</keyword>
<keyword id="KW-0689">Ribosomal protein</keyword>
<keyword id="KW-0694">RNA-binding</keyword>
<keyword id="KW-0699">rRNA-binding</keyword>
<keyword id="KW-0820">tRNA-binding</keyword>
<sequence length="160" mass="18442">MSRRHAAEKRVILPDMKYNSILLSRFINNIMKEGKKALAEKIVYSAFNKIEKKHRVDPYQTFNNAMHNVKPHLEVTSVRVGGANYQVPTHVDERRGYALASRWIINAASKRSEKMMIDKLAEELFEASNNRGVAIKKKEDTHKMAEANKAFSHFSPKKMK</sequence>
<feature type="chain" id="PRO_1000206414" description="Small ribosomal subunit protein uS7">
    <location>
        <begin position="1"/>
        <end position="160"/>
    </location>
</feature>
<accession>C3PMG9</accession>
<organism>
    <name type="scientific">Rickettsia africae (strain ESF-5)</name>
    <dbReference type="NCBI Taxonomy" id="347255"/>
    <lineage>
        <taxon>Bacteria</taxon>
        <taxon>Pseudomonadati</taxon>
        <taxon>Pseudomonadota</taxon>
        <taxon>Alphaproteobacteria</taxon>
        <taxon>Rickettsiales</taxon>
        <taxon>Rickettsiaceae</taxon>
        <taxon>Rickettsieae</taxon>
        <taxon>Rickettsia</taxon>
        <taxon>spotted fever group</taxon>
    </lineage>
</organism>
<proteinExistence type="inferred from homology"/>
<gene>
    <name evidence="1" type="primary">rpsG</name>
    <name type="ordered locus">RAF_ORF0162</name>
</gene>
<dbReference type="EMBL" id="CP001612">
    <property type="protein sequence ID" value="ACP53129.1"/>
    <property type="molecule type" value="Genomic_DNA"/>
</dbReference>
<dbReference type="RefSeq" id="WP_004996646.1">
    <property type="nucleotide sequence ID" value="NC_012633.1"/>
</dbReference>
<dbReference type="SMR" id="C3PMG9"/>
<dbReference type="GeneID" id="95361888"/>
<dbReference type="KEGG" id="raf:RAF_ORF0162"/>
<dbReference type="HOGENOM" id="CLU_072226_1_1_5"/>
<dbReference type="Proteomes" id="UP000002305">
    <property type="component" value="Chromosome"/>
</dbReference>
<dbReference type="GO" id="GO:0015935">
    <property type="term" value="C:small ribosomal subunit"/>
    <property type="evidence" value="ECO:0007669"/>
    <property type="project" value="InterPro"/>
</dbReference>
<dbReference type="GO" id="GO:0019843">
    <property type="term" value="F:rRNA binding"/>
    <property type="evidence" value="ECO:0007669"/>
    <property type="project" value="UniProtKB-UniRule"/>
</dbReference>
<dbReference type="GO" id="GO:0003735">
    <property type="term" value="F:structural constituent of ribosome"/>
    <property type="evidence" value="ECO:0007669"/>
    <property type="project" value="InterPro"/>
</dbReference>
<dbReference type="GO" id="GO:0000049">
    <property type="term" value="F:tRNA binding"/>
    <property type="evidence" value="ECO:0007669"/>
    <property type="project" value="UniProtKB-UniRule"/>
</dbReference>
<dbReference type="GO" id="GO:0006412">
    <property type="term" value="P:translation"/>
    <property type="evidence" value="ECO:0007669"/>
    <property type="project" value="UniProtKB-UniRule"/>
</dbReference>
<dbReference type="CDD" id="cd14869">
    <property type="entry name" value="uS7_Bacteria"/>
    <property type="match status" value="1"/>
</dbReference>
<dbReference type="FunFam" id="1.10.455.10:FF:000001">
    <property type="entry name" value="30S ribosomal protein S7"/>
    <property type="match status" value="1"/>
</dbReference>
<dbReference type="Gene3D" id="1.10.455.10">
    <property type="entry name" value="Ribosomal protein S7 domain"/>
    <property type="match status" value="1"/>
</dbReference>
<dbReference type="HAMAP" id="MF_00480_B">
    <property type="entry name" value="Ribosomal_uS7_B"/>
    <property type="match status" value="1"/>
</dbReference>
<dbReference type="InterPro" id="IPR000235">
    <property type="entry name" value="Ribosomal_uS7"/>
</dbReference>
<dbReference type="InterPro" id="IPR005717">
    <property type="entry name" value="Ribosomal_uS7_bac/org-type"/>
</dbReference>
<dbReference type="InterPro" id="IPR020606">
    <property type="entry name" value="Ribosomal_uS7_CS"/>
</dbReference>
<dbReference type="InterPro" id="IPR023798">
    <property type="entry name" value="Ribosomal_uS7_dom"/>
</dbReference>
<dbReference type="InterPro" id="IPR036823">
    <property type="entry name" value="Ribosomal_uS7_dom_sf"/>
</dbReference>
<dbReference type="NCBIfam" id="TIGR01029">
    <property type="entry name" value="rpsG_bact"/>
    <property type="match status" value="1"/>
</dbReference>
<dbReference type="PANTHER" id="PTHR11205">
    <property type="entry name" value="RIBOSOMAL PROTEIN S7"/>
    <property type="match status" value="1"/>
</dbReference>
<dbReference type="Pfam" id="PF00177">
    <property type="entry name" value="Ribosomal_S7"/>
    <property type="match status" value="1"/>
</dbReference>
<dbReference type="PIRSF" id="PIRSF002122">
    <property type="entry name" value="RPS7p_RPS7a_RPS5e_RPS7o"/>
    <property type="match status" value="1"/>
</dbReference>
<dbReference type="SUPFAM" id="SSF47973">
    <property type="entry name" value="Ribosomal protein S7"/>
    <property type="match status" value="1"/>
</dbReference>
<dbReference type="PROSITE" id="PS00052">
    <property type="entry name" value="RIBOSOMAL_S7"/>
    <property type="match status" value="1"/>
</dbReference>